<proteinExistence type="evidence at protein level"/>
<protein>
    <recommendedName>
        <fullName>WD repeat domain-containing protein 83</fullName>
    </recommendedName>
    <alternativeName>
        <fullName>Mitogen-activated protein kinase organizer 1</fullName>
        <shortName>MAPK organizer 1</shortName>
    </alternativeName>
</protein>
<gene>
    <name type="primary">Wdr83</name>
    <name type="synonym">Morg1</name>
</gene>
<sequence>MAFPEPKPRAPELPQKRMKTLDCSQGAVRAVRFNVDGNYCLTCGSDKTLKLWNPLRGTLLRTYSGHGYEVLDAAGSFDNSHLCSGGGDKTVVLWDVATGQVVRKFRGHAGKVNTVQFNEEATVILSGSIDSSVRCWDCRSRKPEPVQTLDEARDGISSVKVSDHEILAGSVDGRVRRYDLRMGQVSSDYVGSPITCTCFSRDGQCTLISSLDSTLRLLDKDTGELLGEYVGHKNQQYKLDCCLSERDTHVVSCSEDGKVFFWDLVEGALALALPVGSNVVQSLAYHPTEPCLLTAMGGSIQYWREETYEAEGGAG</sequence>
<name>WDR83_MOUSE</name>
<dbReference type="EMBL" id="AY365434">
    <property type="protein sequence ID" value="AAQ64635.1"/>
    <property type="molecule type" value="mRNA"/>
</dbReference>
<dbReference type="EMBL" id="AK005790">
    <property type="protein sequence ID" value="BAB24241.1"/>
    <property type="molecule type" value="mRNA"/>
</dbReference>
<dbReference type="EMBL" id="AK020654">
    <property type="protein sequence ID" value="BAB32164.1"/>
    <property type="molecule type" value="mRNA"/>
</dbReference>
<dbReference type="EMBL" id="BC005587">
    <property type="protein sequence ID" value="AAH05587.1"/>
    <property type="molecule type" value="mRNA"/>
</dbReference>
<dbReference type="EMBL" id="BC019369">
    <property type="protein sequence ID" value="AAH19369.1"/>
    <property type="molecule type" value="mRNA"/>
</dbReference>
<dbReference type="EMBL" id="BC094624">
    <property type="protein sequence ID" value="AAH94624.1"/>
    <property type="molecule type" value="mRNA"/>
</dbReference>
<dbReference type="CCDS" id="CCDS22493.1">
    <molecule id="Q9DAJ4-1"/>
</dbReference>
<dbReference type="RefSeq" id="NP_080675.2">
    <molecule id="Q9DAJ4-1"/>
    <property type="nucleotide sequence ID" value="NM_026399.2"/>
</dbReference>
<dbReference type="SMR" id="Q9DAJ4"/>
<dbReference type="BioGRID" id="212467">
    <property type="interactions" value="2"/>
</dbReference>
<dbReference type="FunCoup" id="Q9DAJ4">
    <property type="interactions" value="2145"/>
</dbReference>
<dbReference type="STRING" id="10090.ENSMUSP00000091048"/>
<dbReference type="PhosphoSitePlus" id="Q9DAJ4"/>
<dbReference type="SwissPalm" id="Q9DAJ4"/>
<dbReference type="PaxDb" id="10090-ENSMUSP00000091048"/>
<dbReference type="PeptideAtlas" id="Q9DAJ4"/>
<dbReference type="ProteomicsDB" id="299757">
    <molecule id="Q9DAJ4-1"/>
</dbReference>
<dbReference type="ProteomicsDB" id="299758">
    <molecule id="Q9DAJ4-2"/>
</dbReference>
<dbReference type="ProteomicsDB" id="299759">
    <molecule id="Q9DAJ4-3"/>
</dbReference>
<dbReference type="Pumba" id="Q9DAJ4"/>
<dbReference type="Antibodypedia" id="26076">
    <property type="antibodies" value="213 antibodies from 29 providers"/>
</dbReference>
<dbReference type="DNASU" id="67836"/>
<dbReference type="Ensembl" id="ENSMUST00000093357.12">
    <molecule id="Q9DAJ4-1"/>
    <property type="protein sequence ID" value="ENSMUSP00000091048.6"/>
    <property type="gene ID" value="ENSMUSG00000005150.17"/>
</dbReference>
<dbReference type="Ensembl" id="ENSMUST00000149050.2">
    <molecule id="Q9DAJ4-2"/>
    <property type="protein sequence ID" value="ENSMUSP00000121568.2"/>
    <property type="gene ID" value="ENSMUSG00000005150.17"/>
</dbReference>
<dbReference type="GeneID" id="67836"/>
<dbReference type="KEGG" id="mmu:67836"/>
<dbReference type="UCSC" id="uc009mph.1">
    <molecule id="Q9DAJ4-1"/>
    <property type="organism name" value="mouse"/>
</dbReference>
<dbReference type="AGR" id="MGI:1915086"/>
<dbReference type="CTD" id="84292"/>
<dbReference type="MGI" id="MGI:1915086">
    <property type="gene designation" value="Wdr83"/>
</dbReference>
<dbReference type="VEuPathDB" id="HostDB:ENSMUSG00000005150"/>
<dbReference type="eggNOG" id="KOG0316">
    <property type="taxonomic scope" value="Eukaryota"/>
</dbReference>
<dbReference type="GeneTree" id="ENSGT00940000159016"/>
<dbReference type="HOGENOM" id="CLU_000288_57_1_1"/>
<dbReference type="InParanoid" id="Q9DAJ4"/>
<dbReference type="OMA" id="MCWDIRT"/>
<dbReference type="OrthoDB" id="71437at2759"/>
<dbReference type="PhylomeDB" id="Q9DAJ4"/>
<dbReference type="TreeFam" id="TF314828"/>
<dbReference type="Reactome" id="R-MMU-5674135">
    <property type="pathway name" value="MAP2K and MAPK activation"/>
</dbReference>
<dbReference type="BioGRID-ORCS" id="67836">
    <property type="hits" value="26 hits in 78 CRISPR screens"/>
</dbReference>
<dbReference type="ChiTaRS" id="Wdr83">
    <property type="organism name" value="mouse"/>
</dbReference>
<dbReference type="PRO" id="PR:Q9DAJ4"/>
<dbReference type="Proteomes" id="UP000000589">
    <property type="component" value="Chromosome 8"/>
</dbReference>
<dbReference type="RNAct" id="Q9DAJ4">
    <property type="molecule type" value="protein"/>
</dbReference>
<dbReference type="Bgee" id="ENSMUSG00000005150">
    <property type="expression patterns" value="Expressed in right kidney and 244 other cell types or tissues"/>
</dbReference>
<dbReference type="ExpressionAtlas" id="Q9DAJ4">
    <property type="expression patterns" value="baseline and differential"/>
</dbReference>
<dbReference type="GO" id="GO:0071013">
    <property type="term" value="C:catalytic step 2 spliceosome"/>
    <property type="evidence" value="ECO:0007669"/>
    <property type="project" value="Ensembl"/>
</dbReference>
<dbReference type="GO" id="GO:0005737">
    <property type="term" value="C:cytoplasm"/>
    <property type="evidence" value="ECO:0000314"/>
    <property type="project" value="MGI"/>
</dbReference>
<dbReference type="GO" id="GO:0005764">
    <property type="term" value="C:lysosome"/>
    <property type="evidence" value="ECO:0007669"/>
    <property type="project" value="UniProtKB-SubCell"/>
</dbReference>
<dbReference type="GO" id="GO:0005634">
    <property type="term" value="C:nucleus"/>
    <property type="evidence" value="ECO:0000314"/>
    <property type="project" value="MGI"/>
</dbReference>
<dbReference type="GO" id="GO:0090594">
    <property type="term" value="P:inflammatory response to wounding"/>
    <property type="evidence" value="ECO:0000315"/>
    <property type="project" value="MGI"/>
</dbReference>
<dbReference type="GO" id="GO:0000398">
    <property type="term" value="P:mRNA splicing, via spliceosome"/>
    <property type="evidence" value="ECO:0007669"/>
    <property type="project" value="Ensembl"/>
</dbReference>
<dbReference type="GO" id="GO:0001843">
    <property type="term" value="P:neural tube closure"/>
    <property type="evidence" value="ECO:0000315"/>
    <property type="project" value="MGI"/>
</dbReference>
<dbReference type="GO" id="GO:0060674">
    <property type="term" value="P:placenta blood vessel development"/>
    <property type="evidence" value="ECO:0000315"/>
    <property type="project" value="MGI"/>
</dbReference>
<dbReference type="GO" id="GO:0043122">
    <property type="term" value="P:regulation of canonical NF-kappaB signal transduction"/>
    <property type="evidence" value="ECO:0000315"/>
    <property type="project" value="MGI"/>
</dbReference>
<dbReference type="GO" id="GO:0001666">
    <property type="term" value="P:response to hypoxia"/>
    <property type="evidence" value="ECO:0000315"/>
    <property type="project" value="MGI"/>
</dbReference>
<dbReference type="GO" id="GO:0032496">
    <property type="term" value="P:response to lipopolysaccharide"/>
    <property type="evidence" value="ECO:0000315"/>
    <property type="project" value="MGI"/>
</dbReference>
<dbReference type="GO" id="GO:0009611">
    <property type="term" value="P:response to wounding"/>
    <property type="evidence" value="ECO:0000315"/>
    <property type="project" value="MGI"/>
</dbReference>
<dbReference type="CDD" id="cd00200">
    <property type="entry name" value="WD40"/>
    <property type="match status" value="1"/>
</dbReference>
<dbReference type="FunFam" id="2.130.10.10:FF:000273">
    <property type="entry name" value="WD repeat domain-containing protein 83"/>
    <property type="match status" value="1"/>
</dbReference>
<dbReference type="Gene3D" id="2.130.10.10">
    <property type="entry name" value="YVTN repeat-like/Quinoprotein amine dehydrogenase"/>
    <property type="match status" value="1"/>
</dbReference>
<dbReference type="InterPro" id="IPR020472">
    <property type="entry name" value="G-protein_beta_WD-40_rep"/>
</dbReference>
<dbReference type="InterPro" id="IPR015943">
    <property type="entry name" value="WD40/YVTN_repeat-like_dom_sf"/>
</dbReference>
<dbReference type="InterPro" id="IPR019775">
    <property type="entry name" value="WD40_repeat_CS"/>
</dbReference>
<dbReference type="InterPro" id="IPR036322">
    <property type="entry name" value="WD40_repeat_dom_sf"/>
</dbReference>
<dbReference type="InterPro" id="IPR001680">
    <property type="entry name" value="WD40_rpt"/>
</dbReference>
<dbReference type="InterPro" id="IPR051980">
    <property type="entry name" value="WD_repeat_MORG1"/>
</dbReference>
<dbReference type="PANTHER" id="PTHR22842:SF3">
    <property type="entry name" value="WD REPEAT DOMAIN-CONTAINING PROTEIN 83"/>
    <property type="match status" value="1"/>
</dbReference>
<dbReference type="PANTHER" id="PTHR22842">
    <property type="entry name" value="WD40 REPEAT PROTEIN"/>
    <property type="match status" value="1"/>
</dbReference>
<dbReference type="Pfam" id="PF00400">
    <property type="entry name" value="WD40"/>
    <property type="match status" value="5"/>
</dbReference>
<dbReference type="PRINTS" id="PR00320">
    <property type="entry name" value="GPROTEINBRPT"/>
</dbReference>
<dbReference type="SMART" id="SM00320">
    <property type="entry name" value="WD40"/>
    <property type="match status" value="7"/>
</dbReference>
<dbReference type="SUPFAM" id="SSF50978">
    <property type="entry name" value="WD40 repeat-like"/>
    <property type="match status" value="1"/>
</dbReference>
<dbReference type="PROSITE" id="PS00678">
    <property type="entry name" value="WD_REPEATS_1"/>
    <property type="match status" value="2"/>
</dbReference>
<dbReference type="PROSITE" id="PS50082">
    <property type="entry name" value="WD_REPEATS_2"/>
    <property type="match status" value="3"/>
</dbReference>
<dbReference type="PROSITE" id="PS50294">
    <property type="entry name" value="WD_REPEATS_REGION"/>
    <property type="match status" value="1"/>
</dbReference>
<keyword id="KW-0025">Alternative splicing</keyword>
<keyword id="KW-0963">Cytoplasm</keyword>
<keyword id="KW-0458">Lysosome</keyword>
<keyword id="KW-0507">mRNA processing</keyword>
<keyword id="KW-0508">mRNA splicing</keyword>
<keyword id="KW-0539">Nucleus</keyword>
<keyword id="KW-1185">Reference proteome</keyword>
<keyword id="KW-0677">Repeat</keyword>
<keyword id="KW-0747">Spliceosome</keyword>
<keyword id="KW-0853">WD repeat</keyword>
<evidence type="ECO:0000250" key="1"/>
<evidence type="ECO:0000250" key="2">
    <source>
        <dbReference type="UniProtKB" id="Q5BLX8"/>
    </source>
</evidence>
<evidence type="ECO:0000250" key="3">
    <source>
        <dbReference type="UniProtKB" id="Q9BRX9"/>
    </source>
</evidence>
<evidence type="ECO:0000269" key="4">
    <source>
    </source>
</evidence>
<evidence type="ECO:0000269" key="5">
    <source>
    </source>
</evidence>
<evidence type="ECO:0000303" key="6">
    <source>
    </source>
</evidence>
<evidence type="ECO:0000305" key="7"/>
<reference key="1">
    <citation type="journal article" date="2004" name="Proc. Natl. Acad. Sci. U.S.A.">
        <title>Modular construction of a signaling scaffold: MORG1 interacts with components of the ERK cascade and links ERK signaling to specific agonists.</title>
        <authorList>
            <person name="Vomastek T."/>
            <person name="Schaeffer H.-J."/>
            <person name="Tarcsafalvi A."/>
            <person name="Smolkin M.E."/>
            <person name="Bissonette E.A."/>
            <person name="Weber M.J."/>
        </authorList>
    </citation>
    <scope>NUCLEOTIDE SEQUENCE [MRNA] (ISOFORM 1)</scope>
    <scope>FUNCTION</scope>
    <scope>TISSUE SPECIFICITY</scope>
    <scope>INTERACTION WITH MAP2K1; MAP2K2; LAMTOR3; ARAF; MAPK1 AND MAPK3</scope>
    <source>
        <tissue>Brain</tissue>
    </source>
</reference>
<reference key="2">
    <citation type="journal article" date="2005" name="Science">
        <title>The transcriptional landscape of the mammalian genome.</title>
        <authorList>
            <person name="Carninci P."/>
            <person name="Kasukawa T."/>
            <person name="Katayama S."/>
            <person name="Gough J."/>
            <person name="Frith M.C."/>
            <person name="Maeda N."/>
            <person name="Oyama R."/>
            <person name="Ravasi T."/>
            <person name="Lenhard B."/>
            <person name="Wells C."/>
            <person name="Kodzius R."/>
            <person name="Shimokawa K."/>
            <person name="Bajic V.B."/>
            <person name="Brenner S.E."/>
            <person name="Batalov S."/>
            <person name="Forrest A.R."/>
            <person name="Zavolan M."/>
            <person name="Davis M.J."/>
            <person name="Wilming L.G."/>
            <person name="Aidinis V."/>
            <person name="Allen J.E."/>
            <person name="Ambesi-Impiombato A."/>
            <person name="Apweiler R."/>
            <person name="Aturaliya R.N."/>
            <person name="Bailey T.L."/>
            <person name="Bansal M."/>
            <person name="Baxter L."/>
            <person name="Beisel K.W."/>
            <person name="Bersano T."/>
            <person name="Bono H."/>
            <person name="Chalk A.M."/>
            <person name="Chiu K.P."/>
            <person name="Choudhary V."/>
            <person name="Christoffels A."/>
            <person name="Clutterbuck D.R."/>
            <person name="Crowe M.L."/>
            <person name="Dalla E."/>
            <person name="Dalrymple B.P."/>
            <person name="de Bono B."/>
            <person name="Della Gatta G."/>
            <person name="di Bernardo D."/>
            <person name="Down T."/>
            <person name="Engstrom P."/>
            <person name="Fagiolini M."/>
            <person name="Faulkner G."/>
            <person name="Fletcher C.F."/>
            <person name="Fukushima T."/>
            <person name="Furuno M."/>
            <person name="Futaki S."/>
            <person name="Gariboldi M."/>
            <person name="Georgii-Hemming P."/>
            <person name="Gingeras T.R."/>
            <person name="Gojobori T."/>
            <person name="Green R.E."/>
            <person name="Gustincich S."/>
            <person name="Harbers M."/>
            <person name="Hayashi Y."/>
            <person name="Hensch T.K."/>
            <person name="Hirokawa N."/>
            <person name="Hill D."/>
            <person name="Huminiecki L."/>
            <person name="Iacono M."/>
            <person name="Ikeo K."/>
            <person name="Iwama A."/>
            <person name="Ishikawa T."/>
            <person name="Jakt M."/>
            <person name="Kanapin A."/>
            <person name="Katoh M."/>
            <person name="Kawasawa Y."/>
            <person name="Kelso J."/>
            <person name="Kitamura H."/>
            <person name="Kitano H."/>
            <person name="Kollias G."/>
            <person name="Krishnan S.P."/>
            <person name="Kruger A."/>
            <person name="Kummerfeld S.K."/>
            <person name="Kurochkin I.V."/>
            <person name="Lareau L.F."/>
            <person name="Lazarevic D."/>
            <person name="Lipovich L."/>
            <person name="Liu J."/>
            <person name="Liuni S."/>
            <person name="McWilliam S."/>
            <person name="Madan Babu M."/>
            <person name="Madera M."/>
            <person name="Marchionni L."/>
            <person name="Matsuda H."/>
            <person name="Matsuzawa S."/>
            <person name="Miki H."/>
            <person name="Mignone F."/>
            <person name="Miyake S."/>
            <person name="Morris K."/>
            <person name="Mottagui-Tabar S."/>
            <person name="Mulder N."/>
            <person name="Nakano N."/>
            <person name="Nakauchi H."/>
            <person name="Ng P."/>
            <person name="Nilsson R."/>
            <person name="Nishiguchi S."/>
            <person name="Nishikawa S."/>
            <person name="Nori F."/>
            <person name="Ohara O."/>
            <person name="Okazaki Y."/>
            <person name="Orlando V."/>
            <person name="Pang K.C."/>
            <person name="Pavan W.J."/>
            <person name="Pavesi G."/>
            <person name="Pesole G."/>
            <person name="Petrovsky N."/>
            <person name="Piazza S."/>
            <person name="Reed J."/>
            <person name="Reid J.F."/>
            <person name="Ring B.Z."/>
            <person name="Ringwald M."/>
            <person name="Rost B."/>
            <person name="Ruan Y."/>
            <person name="Salzberg S.L."/>
            <person name="Sandelin A."/>
            <person name="Schneider C."/>
            <person name="Schoenbach C."/>
            <person name="Sekiguchi K."/>
            <person name="Semple C.A."/>
            <person name="Seno S."/>
            <person name="Sessa L."/>
            <person name="Sheng Y."/>
            <person name="Shibata Y."/>
            <person name="Shimada H."/>
            <person name="Shimada K."/>
            <person name="Silva D."/>
            <person name="Sinclair B."/>
            <person name="Sperling S."/>
            <person name="Stupka E."/>
            <person name="Sugiura K."/>
            <person name="Sultana R."/>
            <person name="Takenaka Y."/>
            <person name="Taki K."/>
            <person name="Tammoja K."/>
            <person name="Tan S.L."/>
            <person name="Tang S."/>
            <person name="Taylor M.S."/>
            <person name="Tegner J."/>
            <person name="Teichmann S.A."/>
            <person name="Ueda H.R."/>
            <person name="van Nimwegen E."/>
            <person name="Verardo R."/>
            <person name="Wei C.L."/>
            <person name="Yagi K."/>
            <person name="Yamanishi H."/>
            <person name="Zabarovsky E."/>
            <person name="Zhu S."/>
            <person name="Zimmer A."/>
            <person name="Hide W."/>
            <person name="Bult C."/>
            <person name="Grimmond S.M."/>
            <person name="Teasdale R.D."/>
            <person name="Liu E.T."/>
            <person name="Brusic V."/>
            <person name="Quackenbush J."/>
            <person name="Wahlestedt C."/>
            <person name="Mattick J.S."/>
            <person name="Hume D.A."/>
            <person name="Kai C."/>
            <person name="Sasaki D."/>
            <person name="Tomaru Y."/>
            <person name="Fukuda S."/>
            <person name="Kanamori-Katayama M."/>
            <person name="Suzuki M."/>
            <person name="Aoki J."/>
            <person name="Arakawa T."/>
            <person name="Iida J."/>
            <person name="Imamura K."/>
            <person name="Itoh M."/>
            <person name="Kato T."/>
            <person name="Kawaji H."/>
            <person name="Kawagashira N."/>
            <person name="Kawashima T."/>
            <person name="Kojima M."/>
            <person name="Kondo S."/>
            <person name="Konno H."/>
            <person name="Nakano K."/>
            <person name="Ninomiya N."/>
            <person name="Nishio T."/>
            <person name="Okada M."/>
            <person name="Plessy C."/>
            <person name="Shibata K."/>
            <person name="Shiraki T."/>
            <person name="Suzuki S."/>
            <person name="Tagami M."/>
            <person name="Waki K."/>
            <person name="Watahiki A."/>
            <person name="Okamura-Oho Y."/>
            <person name="Suzuki H."/>
            <person name="Kawai J."/>
            <person name="Hayashizaki Y."/>
        </authorList>
    </citation>
    <scope>NUCLEOTIDE SEQUENCE [LARGE SCALE MRNA] (ISOFORM 1)</scope>
    <source>
        <strain>C57BL/6J</strain>
        <tissue>Testis</tissue>
        <tissue>Urinary bladder</tissue>
    </source>
</reference>
<reference key="3">
    <citation type="journal article" date="2004" name="Genome Res.">
        <title>The status, quality, and expansion of the NIH full-length cDNA project: the Mammalian Gene Collection (MGC).</title>
        <authorList>
            <consortium name="The MGC Project Team"/>
        </authorList>
    </citation>
    <scope>NUCLEOTIDE SEQUENCE [LARGE SCALE MRNA] (ISOFORMS 1; 2 AND 3)</scope>
    <source>
        <strain>C57BL/6J</strain>
        <strain>Czech II</strain>
        <strain>FVB/N</strain>
        <tissue>Mammary gland</tissue>
        <tissue>Mammary tumor</tissue>
    </source>
</reference>
<reference key="4">
    <citation type="journal article" date="2023" name="Biomolecules">
        <title>Targeted Disruption of the MORG1 Gene in Mice Causes Embryonic Resorption in Early Phase of Development.</title>
        <authorList>
            <person name="Wulf S."/>
            <person name="Mizko L."/>
            <person name="Herrmann K.H."/>
            <person name="Sanchez-Carbonell M."/>
            <person name="Urbach A."/>
            <person name="Lemke C."/>
            <person name="Berndt A."/>
            <person name="Loeffler I."/>
            <person name="Wolf G."/>
        </authorList>
    </citation>
    <scope>DISRUPTION PHENOTYPE</scope>
</reference>
<accession>Q9DAJ4</accession>
<accession>Q505C2</accession>
<accession>Q8VEB7</accession>
<accession>Q99JX9</accession>
<accession>Q9D235</accession>
<comment type="function">
    <text evidence="3 4">Molecular scaffold protein for various multimeric protein complexes. Acts as a module in the assembly of a multicomponent scaffold for the ERK pathway, linking ERK responses to specific agonists. At low concentrations it enhances ERK activation, whereas high concentrations lead to the inhibition of ERK activation. Also involved in response to hypoxia by acting as a negative regulator of HIF1A/HIF-1-alpha via its interaction with EGLN3/PHD3. May promote degradation of HIF1A. May act by recruiting signaling complexes to a specific upstream activator (By similarity). May also be involved in pre-mRNA splicing. Participates in tight junction development by regulating apico-basal polarity, a key step in tissue development and organization. Mechanistically, regulates the translocation of PAR6-aPKC from the cytoplasm to the apical surface by acting as an adapter between PARD6B AND CRB3. Also acts as a negative regulator of mTORC1 under nutrient-rich conditions by binding to the active Rag GTPases to inhibit mTORC1 localization to the lysosome and phosphorylation of downstream targets. This facilitates constitutive basal autophagy during nutrient availability (By similarity).</text>
</comment>
<comment type="subunit">
    <text evidence="2 3 4">Interacts with EGLN3/PHD3. Interacts with ERK signaling proteins MAP2K1/MEK1, MAP2K2/MEK2, LAMTOR3, ARAF/Raf-1, MAPK1/ERK2 and MAPK3/ERK1 (PubMed:15118098). Identified in the spliceosome C complex. Interacts with PARD6B and CRB3. Interacts strongly with GTP-bound RRAGA but not with inactive GDP-bound. Interacts with p62/SQSTM1 (By similarity).</text>
</comment>
<comment type="subcellular location">
    <subcellularLocation>
        <location evidence="3">Cytoplasm</location>
    </subcellularLocation>
    <subcellularLocation>
        <location evidence="3">Lysosome</location>
    </subcellularLocation>
    <subcellularLocation>
        <location evidence="2">Nucleus</location>
    </subcellularLocation>
    <text evidence="1">Predominantly cytoplasmic. Partially nuclear.</text>
</comment>
<comment type="alternative products">
    <event type="alternative splicing"/>
    <isoform>
        <id>Q9DAJ4-1</id>
        <name>1</name>
        <sequence type="displayed"/>
    </isoform>
    <isoform>
        <id>Q9DAJ4-2</id>
        <name>2</name>
        <sequence type="described" ref="VSP_018418 VSP_018419"/>
    </isoform>
    <isoform>
        <id>Q9DAJ4-3</id>
        <name>3</name>
        <sequence type="described" ref="VSP_018417 VSP_018420"/>
    </isoform>
</comment>
<comment type="tissue specificity">
    <text evidence="4">Ubiquitous.</text>
</comment>
<comment type="disruption phenotype">
    <text evidence="5">Morg1 deletion causes embryonic lethality. Embryos show defective turning into the final fetal position and widespread apoptosis in many structures. They also display severe placental abnormalities and delayed neural tube closure.</text>
</comment>
<comment type="similarity">
    <text evidence="7">Belongs to the WD repeat MORG1 family.</text>
</comment>
<organism>
    <name type="scientific">Mus musculus</name>
    <name type="common">Mouse</name>
    <dbReference type="NCBI Taxonomy" id="10090"/>
    <lineage>
        <taxon>Eukaryota</taxon>
        <taxon>Metazoa</taxon>
        <taxon>Chordata</taxon>
        <taxon>Craniata</taxon>
        <taxon>Vertebrata</taxon>
        <taxon>Euteleostomi</taxon>
        <taxon>Mammalia</taxon>
        <taxon>Eutheria</taxon>
        <taxon>Euarchontoglires</taxon>
        <taxon>Glires</taxon>
        <taxon>Rodentia</taxon>
        <taxon>Myomorpha</taxon>
        <taxon>Muroidea</taxon>
        <taxon>Muridae</taxon>
        <taxon>Murinae</taxon>
        <taxon>Mus</taxon>
        <taxon>Mus</taxon>
    </lineage>
</organism>
<feature type="chain" id="PRO_0000235264" description="WD repeat domain-containing protein 83">
    <location>
        <begin position="1"/>
        <end position="315"/>
    </location>
</feature>
<feature type="repeat" description="WD 1">
    <location>
        <begin position="23"/>
        <end position="62"/>
    </location>
</feature>
<feature type="repeat" description="WD 2">
    <location>
        <begin position="65"/>
        <end position="104"/>
    </location>
</feature>
<feature type="repeat" description="WD 3">
    <location>
        <begin position="107"/>
        <end position="146"/>
    </location>
</feature>
<feature type="repeat" description="WD 4">
    <location>
        <begin position="151"/>
        <end position="188"/>
    </location>
</feature>
<feature type="repeat" description="WD 5">
    <location>
        <begin position="190"/>
        <end position="228"/>
    </location>
</feature>
<feature type="repeat" description="WD 6">
    <location>
        <begin position="231"/>
        <end position="272"/>
    </location>
</feature>
<feature type="repeat" description="WD 7">
    <location>
        <begin position="275"/>
        <end position="313"/>
    </location>
</feature>
<feature type="splice variant" id="VSP_018417" description="In isoform 3." evidence="6">
    <original>KVNTVQFNEEATVILSGSIDSSVRCWDC</original>
    <variation>VSTSEKTLVNVCIVEQAEAYGPDTKDAD</variation>
    <location>
        <begin position="111"/>
        <end position="138"/>
    </location>
</feature>
<feature type="splice variant" id="VSP_018418" description="In isoform 2." evidence="6">
    <original>KVNTVQFNEEATVILSGSID</original>
    <variation>VSTSEKTLVNVCIVEIHISP</variation>
    <location>
        <begin position="111"/>
        <end position="130"/>
    </location>
</feature>
<feature type="splice variant" id="VSP_018419" description="In isoform 2." evidence="6">
    <location>
        <begin position="131"/>
        <end position="315"/>
    </location>
</feature>
<feature type="splice variant" id="VSP_018420" description="In isoform 3." evidence="6">
    <location>
        <begin position="139"/>
        <end position="315"/>
    </location>
</feature>
<feature type="sequence conflict" description="In Ref. 2; BAB32164." evidence="7" ref="2">
    <original>V</original>
    <variation>G</variation>
    <location>
        <position position="123"/>
    </location>
</feature>
<feature type="sequence conflict" description="In Ref. 2; BAB32164." evidence="7" ref="2">
    <original>D</original>
    <variation>N</variation>
    <location>
        <position position="150"/>
    </location>
</feature>
<feature type="sequence conflict" description="In Ref. 2; BAB32164." evidence="7" ref="2">
    <original>E</original>
    <variation>D</variation>
    <location>
        <position position="165"/>
    </location>
</feature>
<feature type="sequence conflict" description="In Ref. 2; BAB32164." evidence="7" ref="2">
    <original>A</original>
    <variation>Q</variation>
    <location>
        <position position="168"/>
    </location>
</feature>
<feature type="sequence conflict" description="In Ref. 2; BAB32164." evidence="7" ref="2">
    <original>R</original>
    <variation>S</variation>
    <location>
        <position position="174"/>
    </location>
</feature>
<feature type="sequence conflict" description="In Ref. 3; AAH19369." evidence="7" ref="3">
    <original>S</original>
    <variation>G</variation>
    <location>
        <position position="192"/>
    </location>
</feature>